<reference key="1">
    <citation type="journal article" date="2005" name="Nucleic Acids Res.">
        <title>Genome dynamics and diversity of Shigella species, the etiologic agents of bacillary dysentery.</title>
        <authorList>
            <person name="Yang F."/>
            <person name="Yang J."/>
            <person name="Zhang X."/>
            <person name="Chen L."/>
            <person name="Jiang Y."/>
            <person name="Yan Y."/>
            <person name="Tang X."/>
            <person name="Wang J."/>
            <person name="Xiong Z."/>
            <person name="Dong J."/>
            <person name="Xue Y."/>
            <person name="Zhu Y."/>
            <person name="Xu X."/>
            <person name="Sun L."/>
            <person name="Chen S."/>
            <person name="Nie H."/>
            <person name="Peng J."/>
            <person name="Xu J."/>
            <person name="Wang Y."/>
            <person name="Yuan Z."/>
            <person name="Wen Y."/>
            <person name="Yao Z."/>
            <person name="Shen Y."/>
            <person name="Qiang B."/>
            <person name="Hou Y."/>
            <person name="Yu J."/>
            <person name="Jin Q."/>
        </authorList>
    </citation>
    <scope>NUCLEOTIDE SEQUENCE [LARGE SCALE GENOMIC DNA]</scope>
    <source>
        <strain>Ss046</strain>
    </source>
</reference>
<organism>
    <name type="scientific">Shigella sonnei (strain Ss046)</name>
    <dbReference type="NCBI Taxonomy" id="300269"/>
    <lineage>
        <taxon>Bacteria</taxon>
        <taxon>Pseudomonadati</taxon>
        <taxon>Pseudomonadota</taxon>
        <taxon>Gammaproteobacteria</taxon>
        <taxon>Enterobacterales</taxon>
        <taxon>Enterobacteriaceae</taxon>
        <taxon>Shigella</taxon>
    </lineage>
</organism>
<comment type="function">
    <text evidence="1">Catalyzes the phosphorylation of N-acetyl-D-glucosamine (GlcNAc) derived from cell-wall degradation, yielding GlcNAc-6-P.</text>
</comment>
<comment type="catalytic activity">
    <reaction evidence="1">
        <text>N-acetyl-D-glucosamine + ATP = N-acetyl-D-glucosamine 6-phosphate + ADP + H(+)</text>
        <dbReference type="Rhea" id="RHEA:17417"/>
        <dbReference type="ChEBI" id="CHEBI:15378"/>
        <dbReference type="ChEBI" id="CHEBI:30616"/>
        <dbReference type="ChEBI" id="CHEBI:57513"/>
        <dbReference type="ChEBI" id="CHEBI:456216"/>
        <dbReference type="ChEBI" id="CHEBI:506227"/>
        <dbReference type="EC" id="2.7.1.59"/>
    </reaction>
</comment>
<comment type="pathway">
    <text evidence="1">Cell wall biogenesis; peptidoglycan recycling.</text>
</comment>
<comment type="similarity">
    <text evidence="1">Belongs to the ROK (NagC/XylR) family. NagK subfamily.</text>
</comment>
<evidence type="ECO:0000255" key="1">
    <source>
        <dbReference type="HAMAP-Rule" id="MF_01271"/>
    </source>
</evidence>
<feature type="chain" id="PRO_0000270118" description="N-acetyl-D-glucosamine kinase">
    <location>
        <begin position="1"/>
        <end position="303"/>
    </location>
</feature>
<feature type="binding site" evidence="1">
    <location>
        <begin position="4"/>
        <end position="11"/>
    </location>
    <ligand>
        <name>ATP</name>
        <dbReference type="ChEBI" id="CHEBI:30616"/>
    </ligand>
</feature>
<feature type="binding site" evidence="1">
    <location>
        <begin position="133"/>
        <end position="140"/>
    </location>
    <ligand>
        <name>ATP</name>
        <dbReference type="ChEBI" id="CHEBI:30616"/>
    </ligand>
</feature>
<feature type="binding site" evidence="1">
    <location>
        <position position="157"/>
    </location>
    <ligand>
        <name>Zn(2+)</name>
        <dbReference type="ChEBI" id="CHEBI:29105"/>
    </ligand>
</feature>
<feature type="binding site" evidence="1">
    <location>
        <position position="177"/>
    </location>
    <ligand>
        <name>Zn(2+)</name>
        <dbReference type="ChEBI" id="CHEBI:29105"/>
    </ligand>
</feature>
<feature type="binding site" evidence="1">
    <location>
        <position position="179"/>
    </location>
    <ligand>
        <name>Zn(2+)</name>
        <dbReference type="ChEBI" id="CHEBI:29105"/>
    </ligand>
</feature>
<feature type="binding site" evidence="1">
    <location>
        <position position="184"/>
    </location>
    <ligand>
        <name>Zn(2+)</name>
        <dbReference type="ChEBI" id="CHEBI:29105"/>
    </ligand>
</feature>
<sequence>MYYGFDIGGTKIALGVFDSGRQLQWEKRVPTPRDSYDAFLDAVCELVAEADQRFGCKGSVGIGIPGMPETEDGTLYAANVPAASGKPLRADLSARLDRDVRLDNDANCFALSEAWDDEFTQYPLVMGLILGTGVGGGLIFNGKPITGKSYITGEFGHMRLPVDALTMMGLDFPLRRCGCGQIGCIENYLSGRGFAWLWQHYYHQPLQAPEIIALYDQGDEQARAHVERYLDLLAVCLGNILTIVDSDLVVIGGGLSNFPAITTQLADRLPRHLLPVARVPRIERARHGDAGGMRGAAFLHLTD</sequence>
<name>NAGK_SHISS</name>
<keyword id="KW-0067">ATP-binding</keyword>
<keyword id="KW-0119">Carbohydrate metabolism</keyword>
<keyword id="KW-0418">Kinase</keyword>
<keyword id="KW-0479">Metal-binding</keyword>
<keyword id="KW-0547">Nucleotide-binding</keyword>
<keyword id="KW-1185">Reference proteome</keyword>
<keyword id="KW-0808">Transferase</keyword>
<keyword id="KW-0862">Zinc</keyword>
<dbReference type="EC" id="2.7.1.59" evidence="1"/>
<dbReference type="EMBL" id="CP000038">
    <property type="protein sequence ID" value="AAZ87864.1"/>
    <property type="molecule type" value="Genomic_DNA"/>
</dbReference>
<dbReference type="RefSeq" id="WP_000291281.1">
    <property type="nucleotide sequence ID" value="NC_007384.1"/>
</dbReference>
<dbReference type="SMR" id="Q3Z2Z8"/>
<dbReference type="GeneID" id="93776289"/>
<dbReference type="KEGG" id="ssn:SSON_1139"/>
<dbReference type="HOGENOM" id="CLU_036604_0_3_6"/>
<dbReference type="UniPathway" id="UPA00544"/>
<dbReference type="Proteomes" id="UP000002529">
    <property type="component" value="Chromosome"/>
</dbReference>
<dbReference type="GO" id="GO:0005524">
    <property type="term" value="F:ATP binding"/>
    <property type="evidence" value="ECO:0007669"/>
    <property type="project" value="UniProtKB-UniRule"/>
</dbReference>
<dbReference type="GO" id="GO:0045127">
    <property type="term" value="F:N-acetylglucosamine kinase activity"/>
    <property type="evidence" value="ECO:0007669"/>
    <property type="project" value="UniProtKB-UniRule"/>
</dbReference>
<dbReference type="GO" id="GO:0008270">
    <property type="term" value="F:zinc ion binding"/>
    <property type="evidence" value="ECO:0007669"/>
    <property type="project" value="UniProtKB-UniRule"/>
</dbReference>
<dbReference type="GO" id="GO:0006044">
    <property type="term" value="P:N-acetylglucosamine metabolic process"/>
    <property type="evidence" value="ECO:0007669"/>
    <property type="project" value="UniProtKB-UniRule"/>
</dbReference>
<dbReference type="GO" id="GO:0009254">
    <property type="term" value="P:peptidoglycan turnover"/>
    <property type="evidence" value="ECO:0007669"/>
    <property type="project" value="UniProtKB-UniRule"/>
</dbReference>
<dbReference type="CDD" id="cd24057">
    <property type="entry name" value="ASKHA_NBD_ROK_NAGK"/>
    <property type="match status" value="1"/>
</dbReference>
<dbReference type="FunFam" id="3.30.420.40:FF:000049">
    <property type="entry name" value="N-acetyl-D-glucosamine kinase"/>
    <property type="match status" value="1"/>
</dbReference>
<dbReference type="FunFam" id="3.30.420.40:FF:000051">
    <property type="entry name" value="N-acetyl-D-glucosamine kinase"/>
    <property type="match status" value="1"/>
</dbReference>
<dbReference type="Gene3D" id="3.30.420.40">
    <property type="match status" value="2"/>
</dbReference>
<dbReference type="HAMAP" id="MF_01271">
    <property type="entry name" value="GlcNAc_kinase"/>
    <property type="match status" value="1"/>
</dbReference>
<dbReference type="InterPro" id="IPR043129">
    <property type="entry name" value="ATPase_NBD"/>
</dbReference>
<dbReference type="InterPro" id="IPR023505">
    <property type="entry name" value="N-acetyl-D-glucosamine_kinase"/>
</dbReference>
<dbReference type="InterPro" id="IPR000600">
    <property type="entry name" value="ROK"/>
</dbReference>
<dbReference type="InterPro" id="IPR049874">
    <property type="entry name" value="ROK_cs"/>
</dbReference>
<dbReference type="NCBIfam" id="NF009835">
    <property type="entry name" value="PRK13310.1"/>
    <property type="match status" value="1"/>
</dbReference>
<dbReference type="PANTHER" id="PTHR18964:SF162">
    <property type="entry name" value="N-ACETYL-D-GLUCOSAMINE KINASE"/>
    <property type="match status" value="1"/>
</dbReference>
<dbReference type="PANTHER" id="PTHR18964">
    <property type="entry name" value="ROK (REPRESSOR, ORF, KINASE) FAMILY"/>
    <property type="match status" value="1"/>
</dbReference>
<dbReference type="Pfam" id="PF00480">
    <property type="entry name" value="ROK"/>
    <property type="match status" value="1"/>
</dbReference>
<dbReference type="SUPFAM" id="SSF53067">
    <property type="entry name" value="Actin-like ATPase domain"/>
    <property type="match status" value="1"/>
</dbReference>
<dbReference type="PROSITE" id="PS01125">
    <property type="entry name" value="ROK"/>
    <property type="match status" value="1"/>
</dbReference>
<gene>
    <name evidence="1" type="primary">nagK</name>
    <name type="ordered locus">SSON_1139</name>
</gene>
<accession>Q3Z2Z8</accession>
<protein>
    <recommendedName>
        <fullName evidence="1">N-acetyl-D-glucosamine kinase</fullName>
        <ecNumber evidence="1">2.7.1.59</ecNumber>
    </recommendedName>
    <alternativeName>
        <fullName evidence="1">GlcNAc kinase</fullName>
    </alternativeName>
</protein>
<proteinExistence type="inferred from homology"/>